<keyword id="KW-0067">ATP-binding</keyword>
<keyword id="KW-0190">Covalent protein-DNA linkage</keyword>
<keyword id="KW-0235">DNA replication</keyword>
<keyword id="KW-0238">DNA-binding</keyword>
<keyword id="KW-0255">Endonuclease</keyword>
<keyword id="KW-0347">Helicase</keyword>
<keyword id="KW-1048">Host nucleus</keyword>
<keyword id="KW-0378">Hydrolase</keyword>
<keyword id="KW-0460">Magnesium</keyword>
<keyword id="KW-0479">Metal-binding</keyword>
<keyword id="KW-0540">Nuclease</keyword>
<keyword id="KW-0547">Nucleotide-binding</keyword>
<keyword id="KW-0804">Transcription</keyword>
<keyword id="KW-0805">Transcription regulation</keyword>
<keyword id="KW-1194">Viral DNA replication</keyword>
<keyword id="KW-0231">Viral genome packaging</keyword>
<keyword id="KW-1188">Viral release from host cell</keyword>
<organism>
    <name type="scientific">Bombyx mori densovirus</name>
    <name type="common">BmDNV</name>
    <name type="synonym">Bombyx densonucleosis virus</name>
    <dbReference type="NCBI Taxonomy" id="10809"/>
    <lineage>
        <taxon>Viruses</taxon>
        <taxon>Monodnaviria</taxon>
        <taxon>Shotokuvirae</taxon>
        <taxon>Cossaviricota</taxon>
        <taxon>Quintoviricetes</taxon>
        <taxon>Piccovirales</taxon>
        <taxon>Parvoviridae</taxon>
        <taxon>Densovirinae</taxon>
        <taxon>Iteradensovirus</taxon>
        <taxon>Iteradensovirus lepidopteran1</taxon>
    </lineage>
</organism>
<evidence type="ECO:0000250" key="1">
    <source>
        <dbReference type="UniProtKB" id="D0EZM8"/>
    </source>
</evidence>
<evidence type="ECO:0000250" key="2">
    <source>
        <dbReference type="UniProtKB" id="P03134"/>
    </source>
</evidence>
<evidence type="ECO:0000250" key="3">
    <source>
        <dbReference type="UniProtKB" id="Q9PZT1"/>
    </source>
</evidence>
<evidence type="ECO:0000256" key="4">
    <source>
        <dbReference type="SAM" id="MobiDB-lite"/>
    </source>
</evidence>
<evidence type="ECO:0000305" key="5"/>
<feature type="chain" id="PRO_0000222481" description="Initiator protein NS1">
    <location>
        <begin position="1"/>
        <end position="885"/>
    </location>
</feature>
<feature type="region of interest" description="Disordered" evidence="4">
    <location>
        <begin position="404"/>
        <end position="477"/>
    </location>
</feature>
<feature type="compositionally biased region" description="Polar residues" evidence="4">
    <location>
        <begin position="409"/>
        <end position="423"/>
    </location>
</feature>
<feature type="compositionally biased region" description="Gly residues" evidence="4">
    <location>
        <begin position="452"/>
        <end position="465"/>
    </location>
</feature>
<organismHost>
    <name type="scientific">Bombyx mori</name>
    <name type="common">Silk moth</name>
    <dbReference type="NCBI Taxonomy" id="7091"/>
</organismHost>
<name>NS1_BMDNV</name>
<sequence>MPIWGAISSNDLLNTYYTIEESQQIVEELLDFQMHNDQLEYFDSIEDAKKRFITDLYEILEKKHQKTNTFQIVSPPSAGKNFFIETVLAFYWNTGVIQNFNRYNNFPLMEAVNRRVNYWDEPNFEPDATETLKKLFAGTSLKATVKFQKEANVQKTPVIITANYDKFTKEVWDDRIIKYYWYPCPKLKEYNKRLHPFAWVYLIDKYVTDLLILIKMYNHRVMGNKICNLIKMYKYRVMVINIFSAFICLILIFLTNNYLGPGLYTCKSIDETTLSEAVVIWPSDKVTNHKEVFQADKQARDEFFTSFVHIGNVHSLIGGIGLGTKNLVEEHVLGKPLYGMGKRKSTEKDWAKIKRINRARAARRENQENQPDIREFGHVAGQNINADQEVNLADFPDFLQDFDAEAGPSGTQPVETAQQSPPTMSEDIQPMETVGATDTGGGAQVDPRTGGQAAGGSEMGAGGSANDGREDIFSGAPQPNQHHTLVYGKSYHFTITKWFTEFRHLATTNSGYYAQQRFKHIHGIPWERLLMYVSEGELLRMFRDYTSLKVEEVVCEVYSLGVRLPFVTSATTSSVANANAQYPIDVFHFDEAYETNYGINNVADIINKALGTEWKNATRPTAPVTTAWSEQFPNISASSTSRDINNPVIVDYSLPYFENNVPKDVGIYDYVDIKNGTTAYGKCWEKRFKPTNGLLYAESTLKGNVVTPLAAPTNIMTPIPGLENGYFMSNDQIRERRDLTTSVPPDALTATKLNQSASNNLNAFVDYMGYNYFGEQKAPQSMPKFMIGFVNIRNEDNSLLNAKWDILIKTRIRLTGLQSTREWVARTDRIPPQYFTSQYTQFRYPNINDTPLLRSLGTFKLPTKRPGMDSRIALGELQKQRKMNL</sequence>
<comment type="function">
    <text evidence="2">Multifunctional protein which displays endonuclease and helicase activities required for initiating and directing viral DNA replication. Also plays a role in viral packaging and transactivation of several promoters. Binds site-specifically to 2-3 approximate tandem copies within the origins of replication (Ori), unwinds this hairpin region and nicks one DNA strand thereby initiating the rolling circle replication (RCR).</text>
</comment>
<comment type="catalytic activity">
    <reaction evidence="2">
        <text>ATP + H2O = ADP + phosphate + H(+)</text>
        <dbReference type="Rhea" id="RHEA:13065"/>
        <dbReference type="ChEBI" id="CHEBI:15377"/>
        <dbReference type="ChEBI" id="CHEBI:15378"/>
        <dbReference type="ChEBI" id="CHEBI:30616"/>
        <dbReference type="ChEBI" id="CHEBI:43474"/>
        <dbReference type="ChEBI" id="CHEBI:456216"/>
        <dbReference type="EC" id="3.6.4.12"/>
    </reaction>
</comment>
<comment type="cofactor">
    <cofactor evidence="2">
        <name>Mg(2+)</name>
        <dbReference type="ChEBI" id="CHEBI:18420"/>
    </cofactor>
    <text evidence="2">The endonuclease active site can probably bind other divalent cations.</text>
</comment>
<comment type="subunit">
    <text evidence="2">Homooligomer.</text>
</comment>
<comment type="subcellular location">
    <subcellularLocation>
        <location evidence="1">Host nucleus</location>
    </subcellularLocation>
</comment>
<comment type="domain">
    <text evidence="2 3">In the N-terminus, the endonuclease region is involved in binding to the origin of replication. In the middle, there are the ATPase and helicase activities (By similarity). The C-terminus probably contains a transactivation domain (By similarity).</text>
</comment>
<comment type="similarity">
    <text evidence="5">Belongs to the parvoviruses initiator protein NS1 family.</text>
</comment>
<reference key="1">
    <citation type="journal article" date="1987" name="J. Virol.">
        <title>Organization and nucleotide sequence of a densovirus genome imply a host-dependent evolution of the parvoviruses.</title>
        <authorList>
            <person name="Bando H."/>
            <person name="Kusuda J."/>
            <person name="Gojobori T."/>
            <person name="Maruyama T."/>
            <person name="Kawase S."/>
        </authorList>
    </citation>
    <scope>NUCLEOTIDE SEQUENCE [GENOMIC DNA]</scope>
    <source>
        <strain>Isolate INA</strain>
    </source>
</reference>
<protein>
    <recommendedName>
        <fullName evidence="2">Initiator protein NS1</fullName>
        <shortName>NS1</shortName>
        <ecNumber evidence="3">3.1.21.-</ecNumber>
        <ecNumber evidence="3">3.6.4.12</ecNumber>
    </recommendedName>
    <alternativeName>
        <fullName>Non-structural protein 1</fullName>
    </alternativeName>
    <alternativeName>
        <fullName>Non-structural protein NS1</fullName>
    </alternativeName>
</protein>
<dbReference type="EC" id="3.1.21.-" evidence="3"/>
<dbReference type="EC" id="3.6.4.12" evidence="3"/>
<dbReference type="EMBL" id="M15123">
    <property type="protein sequence ID" value="AAA67698.1"/>
    <property type="molecule type" value="Genomic_DNA"/>
</dbReference>
<dbReference type="PIR" id="C26796">
    <property type="entry name" value="VCPVF2"/>
</dbReference>
<dbReference type="SMR" id="P05842"/>
<dbReference type="Proteomes" id="UP000008471">
    <property type="component" value="Genome"/>
</dbReference>
<dbReference type="GO" id="GO:0042025">
    <property type="term" value="C:host cell nucleus"/>
    <property type="evidence" value="ECO:0007669"/>
    <property type="project" value="UniProtKB-SubCell"/>
</dbReference>
<dbReference type="GO" id="GO:0005524">
    <property type="term" value="F:ATP binding"/>
    <property type="evidence" value="ECO:0007669"/>
    <property type="project" value="UniProtKB-KW"/>
</dbReference>
<dbReference type="GO" id="GO:0016887">
    <property type="term" value="F:ATP hydrolysis activity"/>
    <property type="evidence" value="ECO:0007669"/>
    <property type="project" value="RHEA"/>
</dbReference>
<dbReference type="GO" id="GO:0003677">
    <property type="term" value="F:DNA binding"/>
    <property type="evidence" value="ECO:0007669"/>
    <property type="project" value="UniProtKB-KW"/>
</dbReference>
<dbReference type="GO" id="GO:0004519">
    <property type="term" value="F:endonuclease activity"/>
    <property type="evidence" value="ECO:0007669"/>
    <property type="project" value="UniProtKB-KW"/>
</dbReference>
<dbReference type="GO" id="GO:0004386">
    <property type="term" value="F:helicase activity"/>
    <property type="evidence" value="ECO:0007669"/>
    <property type="project" value="UniProtKB-KW"/>
</dbReference>
<dbReference type="GO" id="GO:0046872">
    <property type="term" value="F:metal ion binding"/>
    <property type="evidence" value="ECO:0007669"/>
    <property type="project" value="UniProtKB-KW"/>
</dbReference>
<dbReference type="GO" id="GO:0006260">
    <property type="term" value="P:DNA replication"/>
    <property type="evidence" value="ECO:0007669"/>
    <property type="project" value="UniProtKB-KW"/>
</dbReference>
<dbReference type="GO" id="GO:0039693">
    <property type="term" value="P:viral DNA genome replication"/>
    <property type="evidence" value="ECO:0007669"/>
    <property type="project" value="UniProtKB-KW"/>
</dbReference>
<dbReference type="Gene3D" id="3.40.50.300">
    <property type="entry name" value="P-loop containing nucleotide triphosphate hydrolases"/>
    <property type="match status" value="1"/>
</dbReference>
<dbReference type="InterPro" id="IPR016184">
    <property type="entry name" value="Capsid/spike_ssDNA_virus"/>
</dbReference>
<dbReference type="InterPro" id="IPR027417">
    <property type="entry name" value="P-loop_NTPase"/>
</dbReference>
<dbReference type="InterPro" id="IPR001257">
    <property type="entry name" value="Parvovirus_NS1_helicase"/>
</dbReference>
<dbReference type="Pfam" id="PF01057">
    <property type="entry name" value="Parvo_NS1"/>
    <property type="match status" value="2"/>
</dbReference>
<dbReference type="SUPFAM" id="SSF52540">
    <property type="entry name" value="P-loop containing nucleoside triphosphate hydrolases"/>
    <property type="match status" value="1"/>
</dbReference>
<dbReference type="SUPFAM" id="SSF88645">
    <property type="entry name" value="ssDNA viruses"/>
    <property type="match status" value="1"/>
</dbReference>
<accession>P05842</accession>
<proteinExistence type="inferred from homology"/>